<feature type="chain" id="PRO_0000231338" description="S-adenosylmethionine:tRNA ribosyltransferase-isomerase">
    <location>
        <begin position="1"/>
        <end position="342"/>
    </location>
</feature>
<reference key="1">
    <citation type="journal article" date="2004" name="Nucleic Acids Res.">
        <title>Thermoadaptation trait revealed by the genome sequence of thermophilic Geobacillus kaustophilus.</title>
        <authorList>
            <person name="Takami H."/>
            <person name="Takaki Y."/>
            <person name="Chee G.-J."/>
            <person name="Nishi S."/>
            <person name="Shimamura S."/>
            <person name="Suzuki H."/>
            <person name="Matsui S."/>
            <person name="Uchiyama I."/>
        </authorList>
    </citation>
    <scope>NUCLEOTIDE SEQUENCE [LARGE SCALE GENOMIC DNA]</scope>
    <source>
        <strain>HTA426</strain>
    </source>
</reference>
<accession>Q5KWR3</accession>
<dbReference type="EC" id="2.4.99.17" evidence="1"/>
<dbReference type="EMBL" id="BA000043">
    <property type="protein sequence ID" value="BAD76873.1"/>
    <property type="molecule type" value="Genomic_DNA"/>
</dbReference>
<dbReference type="RefSeq" id="WP_011232065.1">
    <property type="nucleotide sequence ID" value="NC_006510.1"/>
</dbReference>
<dbReference type="SMR" id="Q5KWR3"/>
<dbReference type="STRING" id="235909.GK2588"/>
<dbReference type="KEGG" id="gka:GK2588"/>
<dbReference type="eggNOG" id="COG0809">
    <property type="taxonomic scope" value="Bacteria"/>
</dbReference>
<dbReference type="HOGENOM" id="CLU_039110_1_0_9"/>
<dbReference type="UniPathway" id="UPA00392"/>
<dbReference type="Proteomes" id="UP000001172">
    <property type="component" value="Chromosome"/>
</dbReference>
<dbReference type="GO" id="GO:0005737">
    <property type="term" value="C:cytoplasm"/>
    <property type="evidence" value="ECO:0007669"/>
    <property type="project" value="UniProtKB-SubCell"/>
</dbReference>
<dbReference type="GO" id="GO:0051075">
    <property type="term" value="F:S-adenosylmethionine:tRNA ribosyltransferase-isomerase activity"/>
    <property type="evidence" value="ECO:0007669"/>
    <property type="project" value="UniProtKB-EC"/>
</dbReference>
<dbReference type="GO" id="GO:0008616">
    <property type="term" value="P:queuosine biosynthetic process"/>
    <property type="evidence" value="ECO:0007669"/>
    <property type="project" value="UniProtKB-UniRule"/>
</dbReference>
<dbReference type="GO" id="GO:0002099">
    <property type="term" value="P:tRNA wobble guanine modification"/>
    <property type="evidence" value="ECO:0007669"/>
    <property type="project" value="TreeGrafter"/>
</dbReference>
<dbReference type="FunFam" id="2.40.10.240:FF:000002">
    <property type="entry name" value="S-adenosylmethionine:tRNA ribosyltransferase-isomerase"/>
    <property type="match status" value="1"/>
</dbReference>
<dbReference type="FunFam" id="3.40.1780.10:FF:000001">
    <property type="entry name" value="S-adenosylmethionine:tRNA ribosyltransferase-isomerase"/>
    <property type="match status" value="1"/>
</dbReference>
<dbReference type="Gene3D" id="2.40.10.240">
    <property type="entry name" value="QueA-like"/>
    <property type="match status" value="1"/>
</dbReference>
<dbReference type="Gene3D" id="3.40.1780.10">
    <property type="entry name" value="QueA-like"/>
    <property type="match status" value="1"/>
</dbReference>
<dbReference type="HAMAP" id="MF_00113">
    <property type="entry name" value="QueA"/>
    <property type="match status" value="1"/>
</dbReference>
<dbReference type="InterPro" id="IPR003699">
    <property type="entry name" value="QueA"/>
</dbReference>
<dbReference type="InterPro" id="IPR042118">
    <property type="entry name" value="QueA_dom1"/>
</dbReference>
<dbReference type="InterPro" id="IPR042119">
    <property type="entry name" value="QueA_dom2"/>
</dbReference>
<dbReference type="InterPro" id="IPR036100">
    <property type="entry name" value="QueA_sf"/>
</dbReference>
<dbReference type="NCBIfam" id="NF001140">
    <property type="entry name" value="PRK00147.1"/>
    <property type="match status" value="1"/>
</dbReference>
<dbReference type="NCBIfam" id="TIGR00113">
    <property type="entry name" value="queA"/>
    <property type="match status" value="1"/>
</dbReference>
<dbReference type="PANTHER" id="PTHR30307">
    <property type="entry name" value="S-ADENOSYLMETHIONINE:TRNA RIBOSYLTRANSFERASE-ISOMERASE"/>
    <property type="match status" value="1"/>
</dbReference>
<dbReference type="PANTHER" id="PTHR30307:SF0">
    <property type="entry name" value="S-ADENOSYLMETHIONINE:TRNA RIBOSYLTRANSFERASE-ISOMERASE"/>
    <property type="match status" value="1"/>
</dbReference>
<dbReference type="Pfam" id="PF02547">
    <property type="entry name" value="Queuosine_synth"/>
    <property type="match status" value="1"/>
</dbReference>
<dbReference type="SUPFAM" id="SSF111337">
    <property type="entry name" value="QueA-like"/>
    <property type="match status" value="1"/>
</dbReference>
<keyword id="KW-0963">Cytoplasm</keyword>
<keyword id="KW-0671">Queuosine biosynthesis</keyword>
<keyword id="KW-1185">Reference proteome</keyword>
<keyword id="KW-0949">S-adenosyl-L-methionine</keyword>
<keyword id="KW-0808">Transferase</keyword>
<protein>
    <recommendedName>
        <fullName evidence="1">S-adenosylmethionine:tRNA ribosyltransferase-isomerase</fullName>
        <ecNumber evidence="1">2.4.99.17</ecNumber>
    </recommendedName>
    <alternativeName>
        <fullName evidence="1">Queuosine biosynthesis protein QueA</fullName>
    </alternativeName>
</protein>
<sequence length="342" mass="38487">MKVDLFDFHLPEELIAQTPLPDRAASRLMVLDKRTGAIRHETFRNIISYLNPGDCLVLNDTRVMPARLYGEKEETGGTVEVLLLKQLDGDRWETLVKPGKRVKPGTKLTFGEGKLEAVCLDTLEHGGRVLEFSYDGLFYEVLAELGEMPLPPYIKEKLDDPERYQTVYAREIGSAAAPTAGLHFTEELLDAIREKGVHIVFITLHVGLGTFRPVQVDDVEKHDMHAEFYQMSEETAETLNRVREQGGRIIAVGTTSTRTLETIAGKHNGRFVAESGWTDIFIYPGYEFKGIDGLVTNFHLPKSTLIMLVSALAGRENILHAYQVAVKERYRFFSFGDAMLII</sequence>
<evidence type="ECO:0000255" key="1">
    <source>
        <dbReference type="HAMAP-Rule" id="MF_00113"/>
    </source>
</evidence>
<proteinExistence type="inferred from homology"/>
<name>QUEA_GEOKA</name>
<comment type="function">
    <text evidence="1">Transfers and isomerizes the ribose moiety from AdoMet to the 7-aminomethyl group of 7-deazaguanine (preQ1-tRNA) to give epoxyqueuosine (oQ-tRNA).</text>
</comment>
<comment type="catalytic activity">
    <reaction evidence="1">
        <text>7-aminomethyl-7-carbaguanosine(34) in tRNA + S-adenosyl-L-methionine = epoxyqueuosine(34) in tRNA + adenine + L-methionine + 2 H(+)</text>
        <dbReference type="Rhea" id="RHEA:32155"/>
        <dbReference type="Rhea" id="RHEA-COMP:10342"/>
        <dbReference type="Rhea" id="RHEA-COMP:18582"/>
        <dbReference type="ChEBI" id="CHEBI:15378"/>
        <dbReference type="ChEBI" id="CHEBI:16708"/>
        <dbReference type="ChEBI" id="CHEBI:57844"/>
        <dbReference type="ChEBI" id="CHEBI:59789"/>
        <dbReference type="ChEBI" id="CHEBI:82833"/>
        <dbReference type="ChEBI" id="CHEBI:194443"/>
        <dbReference type="EC" id="2.4.99.17"/>
    </reaction>
</comment>
<comment type="pathway">
    <text evidence="1">tRNA modification; tRNA-queuosine biosynthesis.</text>
</comment>
<comment type="subunit">
    <text evidence="1">Monomer.</text>
</comment>
<comment type="subcellular location">
    <subcellularLocation>
        <location evidence="1">Cytoplasm</location>
    </subcellularLocation>
</comment>
<comment type="similarity">
    <text evidence="1">Belongs to the QueA family.</text>
</comment>
<gene>
    <name evidence="1" type="primary">queA</name>
    <name type="ordered locus">GK2588</name>
</gene>
<organism>
    <name type="scientific">Geobacillus kaustophilus (strain HTA426)</name>
    <dbReference type="NCBI Taxonomy" id="235909"/>
    <lineage>
        <taxon>Bacteria</taxon>
        <taxon>Bacillati</taxon>
        <taxon>Bacillota</taxon>
        <taxon>Bacilli</taxon>
        <taxon>Bacillales</taxon>
        <taxon>Anoxybacillaceae</taxon>
        <taxon>Geobacillus</taxon>
        <taxon>Geobacillus thermoleovorans group</taxon>
    </lineage>
</organism>